<organism>
    <name type="scientific">Zea mays</name>
    <name type="common">Maize</name>
    <dbReference type="NCBI Taxonomy" id="4577"/>
    <lineage>
        <taxon>Eukaryota</taxon>
        <taxon>Viridiplantae</taxon>
        <taxon>Streptophyta</taxon>
        <taxon>Embryophyta</taxon>
        <taxon>Tracheophyta</taxon>
        <taxon>Spermatophyta</taxon>
        <taxon>Magnoliopsida</taxon>
        <taxon>Liliopsida</taxon>
        <taxon>Poales</taxon>
        <taxon>Poaceae</taxon>
        <taxon>PACMAD clade</taxon>
        <taxon>Panicoideae</taxon>
        <taxon>Andropogonodae</taxon>
        <taxon>Andropogoneae</taxon>
        <taxon>Tripsacinae</taxon>
        <taxon>Zea</taxon>
    </lineage>
</organism>
<reference key="1">
    <citation type="patent" date="2006-03-30" number="WO2006032708">
        <title>Nucleic acid sequences encoding proteins associated with abiotic stress response and plant cells and plants with increased tolerance to environmental stress.</title>
        <authorList>
            <person name="Mckersie B."/>
            <person name="Wild H."/>
            <person name="Plesch G."/>
            <person name="Chardonnens A."/>
            <person name="Puzio P."/>
        </authorList>
    </citation>
    <scope>NUCLEOTIDE SEQUENCE [MRNA]</scope>
    <scope>FUNCTION</scope>
</reference>
<reference key="2">
    <citation type="journal article" date="2008" name="Planta">
        <title>A shotgun phosphoproteomics analysis of embryos in germinated maize seeds.</title>
        <authorList>
            <person name="Lu T.-C."/>
            <person name="Meng L.B."/>
            <person name="Yang C.-P."/>
            <person name="Liu G.-F."/>
            <person name="Liu G.-J."/>
            <person name="Ma W."/>
            <person name="Wang B.-C."/>
        </authorList>
    </citation>
    <scope>PHOSPHORYLATION [LARGE SCALE ANALYSIS] AT SER-60</scope>
    <scope>IDENTIFICATION BY MASS SPECTROMETRY</scope>
    <scope>TISSUE SPECIFICITY</scope>
</reference>
<dbReference type="EMBL" id="CS560004">
    <property type="protein sequence ID" value="CAN08636.1"/>
    <property type="molecule type" value="mRNA"/>
</dbReference>
<dbReference type="STRING" id="4577.P0C8M9"/>
<dbReference type="iPTMnet" id="P0C8M9"/>
<dbReference type="InParanoid" id="P0C8M9"/>
<dbReference type="Proteomes" id="UP000007305">
    <property type="component" value="Unplaced"/>
</dbReference>
<name>SRP1_MAIZE</name>
<accession>P0C8M9</accession>
<proteinExistence type="evidence at protein level"/>
<comment type="function">
    <text evidence="3">Involved in drought, heat, cold, and/or salt tolerance.</text>
</comment>
<comment type="tissue specificity">
    <text evidence="2">Embryo.</text>
</comment>
<sequence>MTSESSTPTGSTRALPASITRSSSSTLSTRPSASTPASTGSLTPSTSTASLVVSPPPARSPVVSTRATATTRPRLAAERPGSATTPCPCGDTDKQLAPCLQEGAGFVIRNAAVRLYMRFGRVWFWHCMLGLWGVGNLIW</sequence>
<feature type="chain" id="PRO_0000361270" description="Stress-related protein 1">
    <location>
        <begin position="1"/>
        <end position="139"/>
    </location>
</feature>
<feature type="region of interest" description="Disordered" evidence="1">
    <location>
        <begin position="1"/>
        <end position="86"/>
    </location>
</feature>
<feature type="compositionally biased region" description="Polar residues" evidence="1">
    <location>
        <begin position="1"/>
        <end position="12"/>
    </location>
</feature>
<feature type="compositionally biased region" description="Low complexity" evidence="1">
    <location>
        <begin position="14"/>
        <end position="53"/>
    </location>
</feature>
<feature type="compositionally biased region" description="Low complexity" evidence="1">
    <location>
        <begin position="60"/>
        <end position="74"/>
    </location>
</feature>
<feature type="modified residue" description="Phosphoserine" evidence="2">
    <location>
        <position position="60"/>
    </location>
</feature>
<protein>
    <recommendedName>
        <fullName>Stress-related protein 1</fullName>
    </recommendedName>
</protein>
<keyword id="KW-0597">Phosphoprotein</keyword>
<keyword id="KW-1185">Reference proteome</keyword>
<gene>
    <name type="primary">SRP1</name>
</gene>
<evidence type="ECO:0000256" key="1">
    <source>
        <dbReference type="SAM" id="MobiDB-lite"/>
    </source>
</evidence>
<evidence type="ECO:0000269" key="2">
    <source>
    </source>
</evidence>
<evidence type="ECO:0000269" key="3">
    <source ref="1"/>
</evidence>